<protein>
    <recommendedName>
        <fullName evidence="1">UPF0756 membrane protein CKO_01811</fullName>
    </recommendedName>
</protein>
<proteinExistence type="inferred from homology"/>
<organism>
    <name type="scientific">Citrobacter koseri (strain ATCC BAA-895 / CDC 4225-83 / SGSC4696)</name>
    <dbReference type="NCBI Taxonomy" id="290338"/>
    <lineage>
        <taxon>Bacteria</taxon>
        <taxon>Pseudomonadati</taxon>
        <taxon>Pseudomonadota</taxon>
        <taxon>Gammaproteobacteria</taxon>
        <taxon>Enterobacterales</taxon>
        <taxon>Enterobacteriaceae</taxon>
        <taxon>Citrobacter</taxon>
    </lineage>
</organism>
<comment type="subcellular location">
    <subcellularLocation>
        <location evidence="1">Cell membrane</location>
        <topology evidence="1">Multi-pass membrane protein</topology>
    </subcellularLocation>
</comment>
<comment type="similarity">
    <text evidence="1">Belongs to the UPF0756 family.</text>
</comment>
<evidence type="ECO:0000255" key="1">
    <source>
        <dbReference type="HAMAP-Rule" id="MF_01874"/>
    </source>
</evidence>
<reference key="1">
    <citation type="submission" date="2007-08" db="EMBL/GenBank/DDBJ databases">
        <authorList>
            <consortium name="The Citrobacter koseri Genome Sequencing Project"/>
            <person name="McClelland M."/>
            <person name="Sanderson E.K."/>
            <person name="Porwollik S."/>
            <person name="Spieth J."/>
            <person name="Clifton W.S."/>
            <person name="Latreille P."/>
            <person name="Courtney L."/>
            <person name="Wang C."/>
            <person name="Pepin K."/>
            <person name="Bhonagiri V."/>
            <person name="Nash W."/>
            <person name="Johnson M."/>
            <person name="Thiruvilangam P."/>
            <person name="Wilson R."/>
        </authorList>
    </citation>
    <scope>NUCLEOTIDE SEQUENCE [LARGE SCALE GENOMIC DNA]</scope>
    <source>
        <strain>ATCC BAA-895 / CDC 4225-83 / SGSC4696</strain>
    </source>
</reference>
<name>Y1811_CITK8</name>
<gene>
    <name type="ordered locus">CKO_01811</name>
</gene>
<sequence length="148" mass="15317">MFDVTLLILLGLAALGFISHNTTVAVSILVLIIVRVTPLNTFFPWIEKQGLTVGIIILTIGVMAPIASGSLPPSTLIHSFVNWKSLVAIAIGVFVSWLGGRGVTLMGSQPQLVAGLLVGTVLGVALFRGVPVGPLIAAGLVSLIIGKQ</sequence>
<keyword id="KW-1003">Cell membrane</keyword>
<keyword id="KW-0472">Membrane</keyword>
<keyword id="KW-1185">Reference proteome</keyword>
<keyword id="KW-0812">Transmembrane</keyword>
<keyword id="KW-1133">Transmembrane helix</keyword>
<feature type="chain" id="PRO_0000388841" description="UPF0756 membrane protein CKO_01811">
    <location>
        <begin position="1"/>
        <end position="148"/>
    </location>
</feature>
<feature type="transmembrane region" description="Helical" evidence="1">
    <location>
        <begin position="14"/>
        <end position="34"/>
    </location>
</feature>
<feature type="transmembrane region" description="Helical" evidence="1">
    <location>
        <begin position="51"/>
        <end position="71"/>
    </location>
</feature>
<feature type="transmembrane region" description="Helical" evidence="1">
    <location>
        <begin position="86"/>
        <end position="106"/>
    </location>
</feature>
<feature type="transmembrane region" description="Helical" evidence="1">
    <location>
        <begin position="121"/>
        <end position="141"/>
    </location>
</feature>
<dbReference type="EMBL" id="CP000822">
    <property type="protein sequence ID" value="ABV12940.1"/>
    <property type="molecule type" value="Genomic_DNA"/>
</dbReference>
<dbReference type="RefSeq" id="WP_012132677.1">
    <property type="nucleotide sequence ID" value="NC_009792.1"/>
</dbReference>
<dbReference type="STRING" id="290338.CKO_01811"/>
<dbReference type="GeneID" id="45135824"/>
<dbReference type="KEGG" id="cko:CKO_01811"/>
<dbReference type="HOGENOM" id="CLU_125889_0_0_6"/>
<dbReference type="OrthoDB" id="80306at2"/>
<dbReference type="Proteomes" id="UP000008148">
    <property type="component" value="Chromosome"/>
</dbReference>
<dbReference type="GO" id="GO:0005886">
    <property type="term" value="C:plasma membrane"/>
    <property type="evidence" value="ECO:0007669"/>
    <property type="project" value="UniProtKB-SubCell"/>
</dbReference>
<dbReference type="HAMAP" id="MF_01874">
    <property type="entry name" value="UPF0756"/>
    <property type="match status" value="1"/>
</dbReference>
<dbReference type="InterPro" id="IPR007382">
    <property type="entry name" value="UPF0756_TM"/>
</dbReference>
<dbReference type="PANTHER" id="PTHR38452">
    <property type="entry name" value="UPF0756 MEMBRANE PROTEIN YEAL"/>
    <property type="match status" value="1"/>
</dbReference>
<dbReference type="PANTHER" id="PTHR38452:SF1">
    <property type="entry name" value="UPF0756 MEMBRANE PROTEIN YEAL"/>
    <property type="match status" value="1"/>
</dbReference>
<dbReference type="Pfam" id="PF04284">
    <property type="entry name" value="DUF441"/>
    <property type="match status" value="1"/>
</dbReference>
<accession>A8AHH7</accession>